<feature type="transit peptide" description="Mitochondrion" evidence="1">
    <location>
        <begin position="1"/>
        <end position="27"/>
    </location>
</feature>
<feature type="chain" id="PRO_0000007412" description="Enoyl-CoA hydratase, mitochondrial">
    <location>
        <begin position="28"/>
        <end position="290"/>
    </location>
</feature>
<feature type="binding site" evidence="1">
    <location>
        <begin position="98"/>
        <end position="101"/>
    </location>
    <ligand>
        <name>substrate</name>
    </ligand>
</feature>
<feature type="binding site" evidence="1">
    <location>
        <position position="141"/>
    </location>
    <ligand>
        <name>substrate</name>
    </ligand>
</feature>
<feature type="site" description="Important for catalytic activity" evidence="1">
    <location>
        <position position="164"/>
    </location>
</feature>
<feature type="modified residue" description="N6-acetyllysine; alternate" evidence="7">
    <location>
        <position position="101"/>
    </location>
</feature>
<feature type="modified residue" description="N6-succinyllysine; alternate" evidence="8">
    <location>
        <position position="101"/>
    </location>
</feature>
<feature type="modified residue" description="Phosphoserine" evidence="3">
    <location>
        <position position="114"/>
    </location>
</feature>
<feature type="modified residue" description="N6-acetyllysine; alternate" evidence="7">
    <location>
        <position position="115"/>
    </location>
</feature>
<feature type="modified residue" description="N6-succinyllysine; alternate" evidence="8">
    <location>
        <position position="115"/>
    </location>
</feature>
<feature type="modified residue" description="N6-succinyllysine" evidence="8">
    <location>
        <position position="204"/>
    </location>
</feature>
<feature type="modified residue" description="N6-acetyllysine" evidence="7">
    <location>
        <position position="211"/>
    </location>
</feature>
<feature type="modified residue" description="N6-acetyllysine; alternate" evidence="7">
    <location>
        <position position="217"/>
    </location>
</feature>
<feature type="modified residue" description="N6-succinyllysine; alternate" evidence="8">
    <location>
        <position position="217"/>
    </location>
</feature>
<feature type="sequence conflict" description="In Ref. 2; AAH02178." evidence="5" ref="2">
    <original>Q</original>
    <variation>L</variation>
    <location>
        <position position="71"/>
    </location>
</feature>
<feature type="sequence conflict" description="In Ref. 2; AAH72658." evidence="5" ref="2">
    <original>G</original>
    <variation>R</variation>
    <location>
        <position position="172"/>
    </location>
</feature>
<name>ECHM_MOUSE</name>
<organism>
    <name type="scientific">Mus musculus</name>
    <name type="common">Mouse</name>
    <dbReference type="NCBI Taxonomy" id="10090"/>
    <lineage>
        <taxon>Eukaryota</taxon>
        <taxon>Metazoa</taxon>
        <taxon>Chordata</taxon>
        <taxon>Craniata</taxon>
        <taxon>Vertebrata</taxon>
        <taxon>Euteleostomi</taxon>
        <taxon>Mammalia</taxon>
        <taxon>Eutheria</taxon>
        <taxon>Euarchontoglires</taxon>
        <taxon>Glires</taxon>
        <taxon>Rodentia</taxon>
        <taxon>Myomorpha</taxon>
        <taxon>Muroidea</taxon>
        <taxon>Muridae</taxon>
        <taxon>Murinae</taxon>
        <taxon>Mus</taxon>
        <taxon>Mus</taxon>
    </lineage>
</organism>
<gene>
    <name evidence="6" type="primary">Echs1</name>
</gene>
<dbReference type="EC" id="4.2.1.17" evidence="3"/>
<dbReference type="EC" id="5.3.3.8" evidence="2"/>
<dbReference type="EMBL" id="AK040391">
    <property type="protein sequence ID" value="BAC30583.1"/>
    <property type="molecule type" value="mRNA"/>
</dbReference>
<dbReference type="EMBL" id="AK044954">
    <property type="protein sequence ID" value="BAC32157.1"/>
    <property type="molecule type" value="mRNA"/>
</dbReference>
<dbReference type="EMBL" id="AK088018">
    <property type="protein sequence ID" value="BAC40099.1"/>
    <property type="molecule type" value="mRNA"/>
</dbReference>
<dbReference type="EMBL" id="AK167404">
    <property type="protein sequence ID" value="BAE39493.1"/>
    <property type="molecule type" value="mRNA"/>
</dbReference>
<dbReference type="EMBL" id="BC002178">
    <property type="protein sequence ID" value="AAH02178.1"/>
    <property type="molecule type" value="mRNA"/>
</dbReference>
<dbReference type="EMBL" id="BC057971">
    <property type="protein sequence ID" value="AAH57971.1"/>
    <property type="molecule type" value="mRNA"/>
</dbReference>
<dbReference type="EMBL" id="BC072658">
    <property type="protein sequence ID" value="AAH72658.1"/>
    <property type="molecule type" value="mRNA"/>
</dbReference>
<dbReference type="CCDS" id="CCDS21964.1"/>
<dbReference type="RefSeq" id="NP_444349.1">
    <property type="nucleotide sequence ID" value="NM_053119.3"/>
</dbReference>
<dbReference type="SMR" id="Q8BH95"/>
<dbReference type="BioGRID" id="220286">
    <property type="interactions" value="46"/>
</dbReference>
<dbReference type="FunCoup" id="Q8BH95">
    <property type="interactions" value="1593"/>
</dbReference>
<dbReference type="IntAct" id="Q8BH95">
    <property type="interactions" value="1"/>
</dbReference>
<dbReference type="MINT" id="Q8BH95"/>
<dbReference type="STRING" id="10090.ENSMUSP00000026538"/>
<dbReference type="GlyGen" id="Q8BH95">
    <property type="glycosylation" value="1 site, 1 O-linked glycan (1 site)"/>
</dbReference>
<dbReference type="iPTMnet" id="Q8BH95"/>
<dbReference type="PhosphoSitePlus" id="Q8BH95"/>
<dbReference type="SwissPalm" id="Q8BH95"/>
<dbReference type="REPRODUCTION-2DPAGE" id="Q8BH95"/>
<dbReference type="CPTAC" id="non-CPTAC-3460"/>
<dbReference type="jPOST" id="Q8BH95"/>
<dbReference type="PaxDb" id="10090-ENSMUSP00000026538"/>
<dbReference type="PeptideAtlas" id="Q8BH95"/>
<dbReference type="ProteomicsDB" id="277712"/>
<dbReference type="Pumba" id="Q8BH95"/>
<dbReference type="Antibodypedia" id="19426">
    <property type="antibodies" value="244 antibodies from 27 providers"/>
</dbReference>
<dbReference type="DNASU" id="93747"/>
<dbReference type="Ensembl" id="ENSMUST00000026538.13">
    <property type="protein sequence ID" value="ENSMUSP00000026538.7"/>
    <property type="gene ID" value="ENSMUSG00000025465.14"/>
</dbReference>
<dbReference type="GeneID" id="93747"/>
<dbReference type="KEGG" id="mmu:93747"/>
<dbReference type="UCSC" id="uc009kgx.1">
    <property type="organism name" value="mouse"/>
</dbReference>
<dbReference type="AGR" id="MGI:2136460"/>
<dbReference type="CTD" id="1892"/>
<dbReference type="MGI" id="MGI:2136460">
    <property type="gene designation" value="Echs1"/>
</dbReference>
<dbReference type="VEuPathDB" id="HostDB:ENSMUSG00000025465"/>
<dbReference type="eggNOG" id="KOG1680">
    <property type="taxonomic scope" value="Eukaryota"/>
</dbReference>
<dbReference type="GeneTree" id="ENSGT00940000157609"/>
<dbReference type="InParanoid" id="Q8BH95"/>
<dbReference type="OMA" id="FCDARED"/>
<dbReference type="OrthoDB" id="2018133at2759"/>
<dbReference type="PhylomeDB" id="Q8BH95"/>
<dbReference type="TreeFam" id="TF314497"/>
<dbReference type="Reactome" id="R-MMU-70895">
    <property type="pathway name" value="Branched-chain amino acid catabolism"/>
</dbReference>
<dbReference type="Reactome" id="R-MMU-77310">
    <property type="pathway name" value="Beta oxidation of lauroyl-CoA to decanoyl-CoA-CoA"/>
</dbReference>
<dbReference type="Reactome" id="R-MMU-77346">
    <property type="pathway name" value="Beta oxidation of decanoyl-CoA to octanoyl-CoA-CoA"/>
</dbReference>
<dbReference type="Reactome" id="R-MMU-77348">
    <property type="pathway name" value="Beta oxidation of octanoyl-CoA to hexanoyl-CoA"/>
</dbReference>
<dbReference type="Reactome" id="R-MMU-77350">
    <property type="pathway name" value="Beta oxidation of hexanoyl-CoA to butanoyl-CoA"/>
</dbReference>
<dbReference type="Reactome" id="R-MMU-77352">
    <property type="pathway name" value="Beta oxidation of butanoyl-CoA to acetyl-CoA"/>
</dbReference>
<dbReference type="UniPathway" id="UPA00659"/>
<dbReference type="BioGRID-ORCS" id="93747">
    <property type="hits" value="8 hits in 79 CRISPR screens"/>
</dbReference>
<dbReference type="ChiTaRS" id="Echs1">
    <property type="organism name" value="mouse"/>
</dbReference>
<dbReference type="PRO" id="PR:Q8BH95"/>
<dbReference type="Proteomes" id="UP000000589">
    <property type="component" value="Chromosome 7"/>
</dbReference>
<dbReference type="RNAct" id="Q8BH95">
    <property type="molecule type" value="protein"/>
</dbReference>
<dbReference type="Bgee" id="ENSMUSG00000025465">
    <property type="expression patterns" value="Expressed in brown adipose tissue and 270 other cell types or tissues"/>
</dbReference>
<dbReference type="GO" id="GO:0005759">
    <property type="term" value="C:mitochondrial matrix"/>
    <property type="evidence" value="ECO:0007669"/>
    <property type="project" value="UniProtKB-SubCell"/>
</dbReference>
<dbReference type="GO" id="GO:0005739">
    <property type="term" value="C:mitochondrion"/>
    <property type="evidence" value="ECO:0007005"/>
    <property type="project" value="MGI"/>
</dbReference>
<dbReference type="GO" id="GO:0043956">
    <property type="term" value="F:3-hydroxypropionyl-CoA dehydratase activity"/>
    <property type="evidence" value="ECO:0007669"/>
    <property type="project" value="Ensembl"/>
</dbReference>
<dbReference type="GO" id="GO:0120092">
    <property type="term" value="F:crotonyl-CoA hydratase activity"/>
    <property type="evidence" value="ECO:0007669"/>
    <property type="project" value="RHEA"/>
</dbReference>
<dbReference type="GO" id="GO:0004165">
    <property type="term" value="F:delta(3)-delta(2)-enoyl-CoA isomerase activity"/>
    <property type="evidence" value="ECO:0007669"/>
    <property type="project" value="RHEA"/>
</dbReference>
<dbReference type="GO" id="GO:0004300">
    <property type="term" value="F:enoyl-CoA hydratase activity"/>
    <property type="evidence" value="ECO:0000250"/>
    <property type="project" value="UniProtKB"/>
</dbReference>
<dbReference type="GO" id="GO:0006635">
    <property type="term" value="P:fatty acid beta-oxidation"/>
    <property type="evidence" value="ECO:0000250"/>
    <property type="project" value="UniProtKB"/>
</dbReference>
<dbReference type="CDD" id="cd06558">
    <property type="entry name" value="crotonase-like"/>
    <property type="match status" value="1"/>
</dbReference>
<dbReference type="FunFam" id="3.90.226.10:FF:000213">
    <property type="entry name" value="Enoyl-CoA hydratase, mitochondrial"/>
    <property type="match status" value="1"/>
</dbReference>
<dbReference type="FunFam" id="1.10.12.10:FF:000001">
    <property type="entry name" value="Probable enoyl-CoA hydratase, mitochondrial"/>
    <property type="match status" value="1"/>
</dbReference>
<dbReference type="Gene3D" id="3.90.226.10">
    <property type="entry name" value="2-enoyl-CoA Hydratase, Chain A, domain 1"/>
    <property type="match status" value="1"/>
</dbReference>
<dbReference type="Gene3D" id="1.10.12.10">
    <property type="entry name" value="Lyase 2-enoyl-coa Hydratase, Chain A, domain 2"/>
    <property type="match status" value="1"/>
</dbReference>
<dbReference type="InterPro" id="IPR029045">
    <property type="entry name" value="ClpP/crotonase-like_dom_sf"/>
</dbReference>
<dbReference type="InterPro" id="IPR018376">
    <property type="entry name" value="Enoyl-CoA_hyd/isom_CS"/>
</dbReference>
<dbReference type="InterPro" id="IPR001753">
    <property type="entry name" value="Enoyl-CoA_hydra/iso"/>
</dbReference>
<dbReference type="InterPro" id="IPR014748">
    <property type="entry name" value="Enoyl-CoA_hydra_C"/>
</dbReference>
<dbReference type="PANTHER" id="PTHR11941:SF54">
    <property type="entry name" value="ENOYL-COA HYDRATASE, MITOCHONDRIAL"/>
    <property type="match status" value="1"/>
</dbReference>
<dbReference type="PANTHER" id="PTHR11941">
    <property type="entry name" value="ENOYL-COA HYDRATASE-RELATED"/>
    <property type="match status" value="1"/>
</dbReference>
<dbReference type="Pfam" id="PF00378">
    <property type="entry name" value="ECH_1"/>
    <property type="match status" value="1"/>
</dbReference>
<dbReference type="SUPFAM" id="SSF52096">
    <property type="entry name" value="ClpP/crotonase"/>
    <property type="match status" value="1"/>
</dbReference>
<dbReference type="PROSITE" id="PS00166">
    <property type="entry name" value="ENOYL_COA_HYDRATASE"/>
    <property type="match status" value="1"/>
</dbReference>
<evidence type="ECO:0000250" key="1"/>
<evidence type="ECO:0000250" key="2">
    <source>
        <dbReference type="UniProtKB" id="P14604"/>
    </source>
</evidence>
<evidence type="ECO:0000250" key="3">
    <source>
        <dbReference type="UniProtKB" id="P30084"/>
    </source>
</evidence>
<evidence type="ECO:0000269" key="4">
    <source>
    </source>
</evidence>
<evidence type="ECO:0000305" key="5"/>
<evidence type="ECO:0000312" key="6">
    <source>
        <dbReference type="MGI" id="MGI:2136460"/>
    </source>
</evidence>
<evidence type="ECO:0007744" key="7">
    <source>
    </source>
</evidence>
<evidence type="ECO:0007744" key="8">
    <source>
    </source>
</evidence>
<sequence>MAALRALLPRACSSLLSSVRCPELRRFASGANFQYIITEKKGKNSSVGLIQLNRPKALNALCNGLIEELNQALETFEQDPAVGAIVLTGGDKAFAAGADIKEMQNRTFQDCYSSKFLSHWDHITRVKKPVIAAVNGYALGGGCELAMMCDIIYAGEKAQFGQPEILLGTIPGAGGTQRLTRAVGKSLAMEMVLTGDRISAQDAKQAGLVSKIFPVEKLVEEAIQCAEKIASNSKIVVAMAKESVNAAFEMTLTEGNKLEKRLFYSTFATDDRREGMTAFVEKRKANFKDH</sequence>
<protein>
    <recommendedName>
        <fullName evidence="5">Enoyl-CoA hydratase, mitochondrial</fullName>
        <shortName>mECH</shortName>
        <shortName>mECH1</shortName>
        <ecNumber evidence="3">4.2.1.17</ecNumber>
        <ecNumber evidence="2">5.3.3.8</ecNumber>
    </recommendedName>
    <alternativeName>
        <fullName>Enoyl-CoA hydratase 1</fullName>
        <shortName>ECHS1</shortName>
    </alternativeName>
    <alternativeName>
        <fullName>Short-chain enoyl-CoA hydratase</fullName>
        <shortName>SCEH</shortName>
    </alternativeName>
</protein>
<keyword id="KW-0007">Acetylation</keyword>
<keyword id="KW-0903">Direct protein sequencing</keyword>
<keyword id="KW-0276">Fatty acid metabolism</keyword>
<keyword id="KW-0413">Isomerase</keyword>
<keyword id="KW-0443">Lipid metabolism</keyword>
<keyword id="KW-0456">Lyase</keyword>
<keyword id="KW-0496">Mitochondrion</keyword>
<keyword id="KW-0597">Phosphoprotein</keyword>
<keyword id="KW-1185">Reference proteome</keyword>
<keyword id="KW-0809">Transit peptide</keyword>
<comment type="function">
    <text evidence="2 3">Converts unsaturated trans-2-enoyl-CoA species ((2E)-enoyl-CoA) to the corresponding (3S)-3-hydroxyacyl-CoA species through addition of a water molecule to the double bond. Catalyzes the hydration of medium- and short-chained fatty enoyl-CoA thioesters from 4 carbons long (C4) up to C16 (By similarity). Has high substrate specificity for crotonyl-CoA ((2E)-butenoyl-CoA) and moderate specificity for acryloyl-CoA, 3-methylcrotonyl-CoA (3-methyl-(2E)-butenoyl-CoA) and methacrylyl-CoA ((2E)-2-methylpropenoyl-CoA). Can bind tiglyl-CoA (2-methylcrotonoyl-CoA), but hydrates only a small amount of this substrate (By similarity). Plays a key role in the beta-oxidation spiral of short- and medium-chain fatty acid oxidation. At a lower rate than the hydratase reaction, catalyzes the isomerase reaction of trans-3-enoyl-CoA species (such as (3E)-hexenoyl-CoA) to trans-2-enoyl-CoA species (such as (2E)-hexenoyl-CoA), which are subsequently hydrated to 3(S)-3-hydroxyacyl-CoA species (such as (3S)-hydroxyhexanoyl-CoA) (By similarity).</text>
</comment>
<comment type="catalytic activity">
    <reaction evidence="3">
        <text>a (3S)-3-hydroxyacyl-CoA = a (2E)-enoyl-CoA + H2O</text>
        <dbReference type="Rhea" id="RHEA:16105"/>
        <dbReference type="ChEBI" id="CHEBI:15377"/>
        <dbReference type="ChEBI" id="CHEBI:57318"/>
        <dbReference type="ChEBI" id="CHEBI:58856"/>
        <dbReference type="EC" id="4.2.1.17"/>
    </reaction>
    <physiologicalReaction direction="right-to-left" evidence="3">
        <dbReference type="Rhea" id="RHEA:16107"/>
    </physiologicalReaction>
</comment>
<comment type="catalytic activity">
    <reaction evidence="2">
        <text>a (3E)-enoyl-CoA = a 4-saturated (2E)-enoyl-CoA</text>
        <dbReference type="Rhea" id="RHEA:45228"/>
        <dbReference type="ChEBI" id="CHEBI:58521"/>
        <dbReference type="ChEBI" id="CHEBI:85097"/>
        <dbReference type="EC" id="5.3.3.8"/>
    </reaction>
    <physiologicalReaction direction="left-to-right" evidence="2">
        <dbReference type="Rhea" id="RHEA:45229"/>
    </physiologicalReaction>
</comment>
<comment type="catalytic activity">
    <reaction evidence="2">
        <text>(3E)-hexenoyl-CoA = (2E)-hexenoyl-CoA</text>
        <dbReference type="Rhea" id="RHEA:45736"/>
        <dbReference type="ChEBI" id="CHEBI:62077"/>
        <dbReference type="ChEBI" id="CHEBI:84790"/>
    </reaction>
    <physiologicalReaction direction="left-to-right" evidence="2">
        <dbReference type="Rhea" id="RHEA:45737"/>
    </physiologicalReaction>
</comment>
<comment type="catalytic activity">
    <reaction evidence="3">
        <text>(3S)-3-hydroxybutanoyl-CoA = (2E)-butenoyl-CoA + H2O</text>
        <dbReference type="Rhea" id="RHEA:26558"/>
        <dbReference type="ChEBI" id="CHEBI:15377"/>
        <dbReference type="ChEBI" id="CHEBI:57316"/>
        <dbReference type="ChEBI" id="CHEBI:57332"/>
    </reaction>
    <physiologicalReaction direction="right-to-left" evidence="3">
        <dbReference type="Rhea" id="RHEA:26560"/>
    </physiologicalReaction>
</comment>
<comment type="catalytic activity">
    <reaction evidence="3">
        <text>3-hydroxyisovaleryl-CoA = 3-methylbut-2-enoyl-CoA + H2O</text>
        <dbReference type="Rhea" id="RHEA:31079"/>
        <dbReference type="ChEBI" id="CHEBI:15377"/>
        <dbReference type="ChEBI" id="CHEBI:57344"/>
        <dbReference type="ChEBI" id="CHEBI:62555"/>
    </reaction>
    <physiologicalReaction direction="right-to-left" evidence="3">
        <dbReference type="Rhea" id="RHEA:31081"/>
    </physiologicalReaction>
</comment>
<comment type="catalytic activity">
    <reaction evidence="3">
        <text>3-hydroxypropanoyl-CoA = acryloyl-CoA + H2O</text>
        <dbReference type="Rhea" id="RHEA:26518"/>
        <dbReference type="ChEBI" id="CHEBI:15377"/>
        <dbReference type="ChEBI" id="CHEBI:57367"/>
        <dbReference type="ChEBI" id="CHEBI:58528"/>
    </reaction>
    <physiologicalReaction direction="right-to-left" evidence="3">
        <dbReference type="Rhea" id="RHEA:26520"/>
    </physiologicalReaction>
</comment>
<comment type="catalytic activity">
    <reaction evidence="3">
        <text>3-hydroxybutanoyl-CoA = (2E)-butenoyl-CoA + H2O</text>
        <dbReference type="Rhea" id="RHEA:45584"/>
        <dbReference type="ChEBI" id="CHEBI:15377"/>
        <dbReference type="ChEBI" id="CHEBI:57332"/>
        <dbReference type="ChEBI" id="CHEBI:78611"/>
    </reaction>
    <physiologicalReaction direction="right-to-left" evidence="3">
        <dbReference type="Rhea" id="RHEA:45586"/>
    </physiologicalReaction>
</comment>
<comment type="catalytic activity">
    <reaction evidence="3">
        <text>2-methylpropenoyl-CoA + H2O = (S)-3-hydroxyisobutanoyl-CoA</text>
        <dbReference type="Rhea" id="RHEA:31175"/>
        <dbReference type="ChEBI" id="CHEBI:15377"/>
        <dbReference type="ChEBI" id="CHEBI:62500"/>
        <dbReference type="ChEBI" id="CHEBI:62611"/>
    </reaction>
    <physiologicalReaction direction="left-to-right" evidence="3">
        <dbReference type="Rhea" id="RHEA:31176"/>
    </physiologicalReaction>
</comment>
<comment type="catalytic activity">
    <reaction evidence="2">
        <text>(3S)-hydroxyhexanoyl-CoA = (2E)-hexenoyl-CoA + H2O</text>
        <dbReference type="Rhea" id="RHEA:30547"/>
        <dbReference type="ChEBI" id="CHEBI:15377"/>
        <dbReference type="ChEBI" id="CHEBI:62075"/>
        <dbReference type="ChEBI" id="CHEBI:62077"/>
    </reaction>
    <physiologicalReaction direction="right-to-left" evidence="2">
        <dbReference type="Rhea" id="RHEA:30549"/>
    </physiologicalReaction>
</comment>
<comment type="catalytic activity">
    <reaction evidence="2">
        <text>(3S)-hydroxydecanoyl-CoA = (2E)-decenoyl-CoA + H2O</text>
        <dbReference type="Rhea" id="RHEA:31191"/>
        <dbReference type="ChEBI" id="CHEBI:15377"/>
        <dbReference type="ChEBI" id="CHEBI:61406"/>
        <dbReference type="ChEBI" id="CHEBI:62616"/>
    </reaction>
    <physiologicalReaction direction="right-to-left" evidence="2">
        <dbReference type="Rhea" id="RHEA:31193"/>
    </physiologicalReaction>
</comment>
<comment type="pathway">
    <text evidence="3">Lipid metabolism; fatty acid beta-oxidation.</text>
</comment>
<comment type="subunit">
    <text evidence="2">Homohexamer; dimer of trimers.</text>
</comment>
<comment type="subcellular location">
    <subcellularLocation>
        <location evidence="2">Mitochondrion matrix</location>
    </subcellularLocation>
</comment>
<comment type="PTM">
    <text evidence="4">Acetylation of Lys-101 is observed in liver mitochondria from fasted mice but not from fed mice.</text>
</comment>
<comment type="similarity">
    <text evidence="5">Belongs to the enoyl-CoA hydratase/isomerase family.</text>
</comment>
<proteinExistence type="evidence at protein level"/>
<accession>Q8BH95</accession>
<accession>Q3TJK2</accession>
<accession>Q6GQS2</accession>
<accession>Q6PEN1</accession>
<accession>Q99LX7</accession>
<reference key="1">
    <citation type="journal article" date="2005" name="Science">
        <title>The transcriptional landscape of the mammalian genome.</title>
        <authorList>
            <person name="Carninci P."/>
            <person name="Kasukawa T."/>
            <person name="Katayama S."/>
            <person name="Gough J."/>
            <person name="Frith M.C."/>
            <person name="Maeda N."/>
            <person name="Oyama R."/>
            <person name="Ravasi T."/>
            <person name="Lenhard B."/>
            <person name="Wells C."/>
            <person name="Kodzius R."/>
            <person name="Shimokawa K."/>
            <person name="Bajic V.B."/>
            <person name="Brenner S.E."/>
            <person name="Batalov S."/>
            <person name="Forrest A.R."/>
            <person name="Zavolan M."/>
            <person name="Davis M.J."/>
            <person name="Wilming L.G."/>
            <person name="Aidinis V."/>
            <person name="Allen J.E."/>
            <person name="Ambesi-Impiombato A."/>
            <person name="Apweiler R."/>
            <person name="Aturaliya R.N."/>
            <person name="Bailey T.L."/>
            <person name="Bansal M."/>
            <person name="Baxter L."/>
            <person name="Beisel K.W."/>
            <person name="Bersano T."/>
            <person name="Bono H."/>
            <person name="Chalk A.M."/>
            <person name="Chiu K.P."/>
            <person name="Choudhary V."/>
            <person name="Christoffels A."/>
            <person name="Clutterbuck D.R."/>
            <person name="Crowe M.L."/>
            <person name="Dalla E."/>
            <person name="Dalrymple B.P."/>
            <person name="de Bono B."/>
            <person name="Della Gatta G."/>
            <person name="di Bernardo D."/>
            <person name="Down T."/>
            <person name="Engstrom P."/>
            <person name="Fagiolini M."/>
            <person name="Faulkner G."/>
            <person name="Fletcher C.F."/>
            <person name="Fukushima T."/>
            <person name="Furuno M."/>
            <person name="Futaki S."/>
            <person name="Gariboldi M."/>
            <person name="Georgii-Hemming P."/>
            <person name="Gingeras T.R."/>
            <person name="Gojobori T."/>
            <person name="Green R.E."/>
            <person name="Gustincich S."/>
            <person name="Harbers M."/>
            <person name="Hayashi Y."/>
            <person name="Hensch T.K."/>
            <person name="Hirokawa N."/>
            <person name="Hill D."/>
            <person name="Huminiecki L."/>
            <person name="Iacono M."/>
            <person name="Ikeo K."/>
            <person name="Iwama A."/>
            <person name="Ishikawa T."/>
            <person name="Jakt M."/>
            <person name="Kanapin A."/>
            <person name="Katoh M."/>
            <person name="Kawasawa Y."/>
            <person name="Kelso J."/>
            <person name="Kitamura H."/>
            <person name="Kitano H."/>
            <person name="Kollias G."/>
            <person name="Krishnan S.P."/>
            <person name="Kruger A."/>
            <person name="Kummerfeld S.K."/>
            <person name="Kurochkin I.V."/>
            <person name="Lareau L.F."/>
            <person name="Lazarevic D."/>
            <person name="Lipovich L."/>
            <person name="Liu J."/>
            <person name="Liuni S."/>
            <person name="McWilliam S."/>
            <person name="Madan Babu M."/>
            <person name="Madera M."/>
            <person name="Marchionni L."/>
            <person name="Matsuda H."/>
            <person name="Matsuzawa S."/>
            <person name="Miki H."/>
            <person name="Mignone F."/>
            <person name="Miyake S."/>
            <person name="Morris K."/>
            <person name="Mottagui-Tabar S."/>
            <person name="Mulder N."/>
            <person name="Nakano N."/>
            <person name="Nakauchi H."/>
            <person name="Ng P."/>
            <person name="Nilsson R."/>
            <person name="Nishiguchi S."/>
            <person name="Nishikawa S."/>
            <person name="Nori F."/>
            <person name="Ohara O."/>
            <person name="Okazaki Y."/>
            <person name="Orlando V."/>
            <person name="Pang K.C."/>
            <person name="Pavan W.J."/>
            <person name="Pavesi G."/>
            <person name="Pesole G."/>
            <person name="Petrovsky N."/>
            <person name="Piazza S."/>
            <person name="Reed J."/>
            <person name="Reid J.F."/>
            <person name="Ring B.Z."/>
            <person name="Ringwald M."/>
            <person name="Rost B."/>
            <person name="Ruan Y."/>
            <person name="Salzberg S.L."/>
            <person name="Sandelin A."/>
            <person name="Schneider C."/>
            <person name="Schoenbach C."/>
            <person name="Sekiguchi K."/>
            <person name="Semple C.A."/>
            <person name="Seno S."/>
            <person name="Sessa L."/>
            <person name="Sheng Y."/>
            <person name="Shibata Y."/>
            <person name="Shimada H."/>
            <person name="Shimada K."/>
            <person name="Silva D."/>
            <person name="Sinclair B."/>
            <person name="Sperling S."/>
            <person name="Stupka E."/>
            <person name="Sugiura K."/>
            <person name="Sultana R."/>
            <person name="Takenaka Y."/>
            <person name="Taki K."/>
            <person name="Tammoja K."/>
            <person name="Tan S.L."/>
            <person name="Tang S."/>
            <person name="Taylor M.S."/>
            <person name="Tegner J."/>
            <person name="Teichmann S.A."/>
            <person name="Ueda H.R."/>
            <person name="van Nimwegen E."/>
            <person name="Verardo R."/>
            <person name="Wei C.L."/>
            <person name="Yagi K."/>
            <person name="Yamanishi H."/>
            <person name="Zabarovsky E."/>
            <person name="Zhu S."/>
            <person name="Zimmer A."/>
            <person name="Hide W."/>
            <person name="Bult C."/>
            <person name="Grimmond S.M."/>
            <person name="Teasdale R.D."/>
            <person name="Liu E.T."/>
            <person name="Brusic V."/>
            <person name="Quackenbush J."/>
            <person name="Wahlestedt C."/>
            <person name="Mattick J.S."/>
            <person name="Hume D.A."/>
            <person name="Kai C."/>
            <person name="Sasaki D."/>
            <person name="Tomaru Y."/>
            <person name="Fukuda S."/>
            <person name="Kanamori-Katayama M."/>
            <person name="Suzuki M."/>
            <person name="Aoki J."/>
            <person name="Arakawa T."/>
            <person name="Iida J."/>
            <person name="Imamura K."/>
            <person name="Itoh M."/>
            <person name="Kato T."/>
            <person name="Kawaji H."/>
            <person name="Kawagashira N."/>
            <person name="Kawashima T."/>
            <person name="Kojima M."/>
            <person name="Kondo S."/>
            <person name="Konno H."/>
            <person name="Nakano K."/>
            <person name="Ninomiya N."/>
            <person name="Nishio T."/>
            <person name="Okada M."/>
            <person name="Plessy C."/>
            <person name="Shibata K."/>
            <person name="Shiraki T."/>
            <person name="Suzuki S."/>
            <person name="Tagami M."/>
            <person name="Waki K."/>
            <person name="Watahiki A."/>
            <person name="Okamura-Oho Y."/>
            <person name="Suzuki H."/>
            <person name="Kawai J."/>
            <person name="Hayashizaki Y."/>
        </authorList>
    </citation>
    <scope>NUCLEOTIDE SEQUENCE [LARGE SCALE MRNA]</scope>
    <source>
        <strain>C57BL/6J</strain>
        <strain>NOD</strain>
        <tissue>Liver</tissue>
        <tissue>Thymus</tissue>
    </source>
</reference>
<reference key="2">
    <citation type="journal article" date="2004" name="Genome Res.">
        <title>The status, quality, and expansion of the NIH full-length cDNA project: the Mammalian Gene Collection (MGC).</title>
        <authorList>
            <consortium name="The MGC Project Team"/>
        </authorList>
    </citation>
    <scope>NUCLEOTIDE SEQUENCE [LARGE SCALE MRNA]</scope>
    <source>
        <strain>C57BL/6J</strain>
        <strain>FVB/N</strain>
        <tissue>Brain</tissue>
        <tissue>Mammary gland</tissue>
    </source>
</reference>
<reference key="3">
    <citation type="submission" date="2007-04" db="UniProtKB">
        <authorList>
            <person name="Lubec G."/>
            <person name="Klug S."/>
            <person name="Kang S.U."/>
        </authorList>
    </citation>
    <scope>PROTEIN SEQUENCE OF 116-125; 158-178 AND 274-282</scope>
    <scope>IDENTIFICATION BY MASS SPECTROMETRY</scope>
    <source>
        <strain>C57BL/6J</strain>
        <tissue>Brain</tissue>
        <tissue>Hippocampus</tissue>
    </source>
</reference>
<reference key="4">
    <citation type="journal article" date="2010" name="Cell">
        <title>A tissue-specific atlas of mouse protein phosphorylation and expression.</title>
        <authorList>
            <person name="Huttlin E.L."/>
            <person name="Jedrychowski M.P."/>
            <person name="Elias J.E."/>
            <person name="Goswami T."/>
            <person name="Rad R."/>
            <person name="Beausoleil S.A."/>
            <person name="Villen J."/>
            <person name="Haas W."/>
            <person name="Sowa M.E."/>
            <person name="Gygi S.P."/>
        </authorList>
    </citation>
    <scope>IDENTIFICATION BY MASS SPECTROMETRY [LARGE SCALE ANALYSIS]</scope>
    <source>
        <tissue>Brain</tissue>
        <tissue>Brown adipose tissue</tissue>
        <tissue>Heart</tissue>
        <tissue>Kidney</tissue>
        <tissue>Liver</tissue>
        <tissue>Lung</tissue>
        <tissue>Pancreas</tissue>
        <tissue>Spleen</tissue>
        <tissue>Testis</tissue>
    </source>
</reference>
<reference key="5">
    <citation type="journal article" date="2013" name="Mol. Cell">
        <title>SIRT5-mediated lysine desuccinylation impacts diverse metabolic pathways.</title>
        <authorList>
            <person name="Park J."/>
            <person name="Chen Y."/>
            <person name="Tishkoff D.X."/>
            <person name="Peng C."/>
            <person name="Tan M."/>
            <person name="Dai L."/>
            <person name="Xie Z."/>
            <person name="Zhang Y."/>
            <person name="Zwaans B.M."/>
            <person name="Skinner M.E."/>
            <person name="Lombard D.B."/>
            <person name="Zhao Y."/>
        </authorList>
    </citation>
    <scope>SUCCINYLATION [LARGE SCALE ANALYSIS] AT LYS-101; LYS-115; LYS-204 AND LYS-217</scope>
    <scope>IDENTIFICATION BY MASS SPECTROMETRY [LARGE SCALE ANALYSIS]</scope>
    <source>
        <tissue>Embryonic fibroblast</tissue>
        <tissue>Liver</tissue>
    </source>
</reference>
<reference key="6">
    <citation type="journal article" date="2013" name="Proc. Natl. Acad. Sci. U.S.A.">
        <title>Label-free quantitative proteomics of the lysine acetylome in mitochondria identifies substrates of SIRT3 in metabolic pathways.</title>
        <authorList>
            <person name="Rardin M.J."/>
            <person name="Newman J.C."/>
            <person name="Held J.M."/>
            <person name="Cusack M.P."/>
            <person name="Sorensen D.J."/>
            <person name="Li B."/>
            <person name="Schilling B."/>
            <person name="Mooney S.D."/>
            <person name="Kahn C.R."/>
            <person name="Verdin E."/>
            <person name="Gibson B.W."/>
        </authorList>
    </citation>
    <scope>ACETYLATION [LARGE SCALE ANALYSIS] AT LYS-101; LYS-115; LYS-211 AND LYS-217</scope>
    <scope>IDENTIFICATION BY MASS SPECTROMETRY [LARGE SCALE ANALYSIS]</scope>
    <source>
        <tissue>Liver</tissue>
    </source>
</reference>